<sequence>VSGVADER</sequence>
<proteinExistence type="evidence at protein level"/>
<feature type="chain" id="PRO_0000341526" description="Unknown protein 3">
    <location>
        <begin position="1" status="less than"/>
        <end position="8" status="greater than"/>
    </location>
</feature>
<feature type="non-terminal residue">
    <location>
        <position position="1"/>
    </location>
</feature>
<feature type="non-terminal residue">
    <location>
        <position position="8"/>
    </location>
</feature>
<keyword id="KW-0903">Direct protein sequencing</keyword>
<reference evidence="1" key="1">
    <citation type="submission" date="2007-12" db="UniProtKB">
        <authorList>
            <person name="Gabaldon C."/>
            <person name="Gomez Ros L.V."/>
            <person name="Novo Uzal E."/>
            <person name="Ros Barcelo A."/>
        </authorList>
    </citation>
    <scope>PROTEIN SEQUENCE</scope>
    <source>
        <strain>cv. Envy</strain>
        <tissue>Callus</tissue>
    </source>
</reference>
<name>UP03_ZINEL</name>
<evidence type="ECO:0000305" key="1"/>
<accession>P85415</accession>
<protein>
    <recommendedName>
        <fullName>Unknown protein 3</fullName>
    </recommendedName>
</protein>
<organism>
    <name type="scientific">Zinnia elegans</name>
    <name type="common">Garden zinnia</name>
    <name type="synonym">Zinnia violacea</name>
    <dbReference type="NCBI Taxonomy" id="34245"/>
    <lineage>
        <taxon>Eukaryota</taxon>
        <taxon>Viridiplantae</taxon>
        <taxon>Streptophyta</taxon>
        <taxon>Embryophyta</taxon>
        <taxon>Tracheophyta</taxon>
        <taxon>Spermatophyta</taxon>
        <taxon>Magnoliopsida</taxon>
        <taxon>eudicotyledons</taxon>
        <taxon>Gunneridae</taxon>
        <taxon>Pentapetalae</taxon>
        <taxon>asterids</taxon>
        <taxon>campanulids</taxon>
        <taxon>Asterales</taxon>
        <taxon>Asteraceae</taxon>
        <taxon>Asteroideae</taxon>
        <taxon>Heliantheae alliance</taxon>
        <taxon>Heliantheae</taxon>
        <taxon>Zinnia</taxon>
    </lineage>
</organism>